<feature type="chain" id="PRO_0000415403" description="Aurora kinase">
    <location>
        <begin position="1"/>
        <end position="407"/>
    </location>
</feature>
<feature type="domain" description="Protein kinase" evidence="2">
    <location>
        <begin position="147"/>
        <end position="399"/>
    </location>
</feature>
<feature type="region of interest" description="Disordered" evidence="4">
    <location>
        <begin position="1"/>
        <end position="43"/>
    </location>
</feature>
<feature type="region of interest" description="Disordered" evidence="4">
    <location>
        <begin position="66"/>
        <end position="137"/>
    </location>
</feature>
<feature type="compositionally biased region" description="Low complexity" evidence="4">
    <location>
        <begin position="31"/>
        <end position="43"/>
    </location>
</feature>
<feature type="compositionally biased region" description="Low complexity" evidence="4">
    <location>
        <begin position="126"/>
        <end position="136"/>
    </location>
</feature>
<feature type="active site" description="Proton acceptor" evidence="1 2 3">
    <location>
        <position position="272"/>
    </location>
</feature>
<feature type="binding site" evidence="1 2">
    <location>
        <position position="157"/>
    </location>
    <ligand>
        <name>ATP</name>
        <dbReference type="ChEBI" id="CHEBI:30616"/>
    </ligand>
</feature>
<feature type="binding site" evidence="1 2">
    <location>
        <position position="176"/>
    </location>
    <ligand>
        <name>ATP</name>
        <dbReference type="ChEBI" id="CHEBI:30616"/>
    </ligand>
</feature>
<feature type="binding site" evidence="1 2">
    <location>
        <begin position="224"/>
        <end position="227"/>
    </location>
    <ligand>
        <name>ATP</name>
        <dbReference type="ChEBI" id="CHEBI:30616"/>
    </ligand>
</feature>
<feature type="binding site" evidence="1 2">
    <location>
        <position position="290"/>
    </location>
    <ligand>
        <name>ATP</name>
        <dbReference type="ChEBI" id="CHEBI:30616"/>
    </ligand>
</feature>
<feature type="mutagenesis site" description="Loss of kinase activity." evidence="5">
    <original>D</original>
    <variation>A</variation>
    <location>
        <position position="290"/>
    </location>
</feature>
<organism>
    <name type="scientific">Patiria pectinifera</name>
    <name type="common">Starfish</name>
    <name type="synonym">Asterina pectinifera</name>
    <dbReference type="NCBI Taxonomy" id="7594"/>
    <lineage>
        <taxon>Eukaryota</taxon>
        <taxon>Metazoa</taxon>
        <taxon>Echinodermata</taxon>
        <taxon>Eleutherozoa</taxon>
        <taxon>Asterozoa</taxon>
        <taxon>Asteroidea</taxon>
        <taxon>Valvatacea</taxon>
        <taxon>Valvatida</taxon>
        <taxon>Asterinidae</taxon>
        <taxon>Patiria</taxon>
    </lineage>
</organism>
<sequence>MTPTGPSHHSMAPKRVLPAASQSNMYGNIRSASTTSTTASTSSQALRLLQNAKTSKNADNRIAHAERQGPPSAHPAAMQKPAARVAPSNENRPDPAARQHQHQQQLQQQKATGHDRVLKESQAGNSTTTTMTSTQSKEANKWSLANFDIGRPLGKGKFGNVYLAREKKSKFIVALKVLFKSQLQKAKVEHQLRREIEIQSHLRHDHILRLYGYFYDDTRVYLILEYAARGELYKEMQAQKAGHFDEDRSAVYIYQLAKALLYCHEKKVIHRDIKPENLLLDLKGDLKIADFGWSVHAPSSRRATLCGTLDYLPPEMIEGKTHDEKVDLWSLGVLCYEFLVGKPPFESQGNTETYRKITKVEFTFPKHVSEGARDLICKLLKHNPSHRLSLEGVIAHAWIQEKISQRS</sequence>
<proteinExistence type="evidence at protein level"/>
<dbReference type="EC" id="2.7.11.1" evidence="1"/>
<dbReference type="EMBL" id="AB530259">
    <property type="protein sequence ID" value="BAJ10384.1"/>
    <property type="molecule type" value="mRNA"/>
</dbReference>
<dbReference type="SMR" id="D7UQM5"/>
<dbReference type="GO" id="GO:0005813">
    <property type="term" value="C:centrosome"/>
    <property type="evidence" value="ECO:0000250"/>
    <property type="project" value="UniProtKB"/>
</dbReference>
<dbReference type="GO" id="GO:0000775">
    <property type="term" value="C:chromosome, centromeric region"/>
    <property type="evidence" value="ECO:0007669"/>
    <property type="project" value="UniProtKB-SubCell"/>
</dbReference>
<dbReference type="GO" id="GO:0005737">
    <property type="term" value="C:cytoplasm"/>
    <property type="evidence" value="ECO:0007669"/>
    <property type="project" value="UniProtKB-KW"/>
</dbReference>
<dbReference type="GO" id="GO:0030496">
    <property type="term" value="C:midbody"/>
    <property type="evidence" value="ECO:0007669"/>
    <property type="project" value="UniProtKB-SubCell"/>
</dbReference>
<dbReference type="GO" id="GO:0005634">
    <property type="term" value="C:nucleus"/>
    <property type="evidence" value="ECO:0007669"/>
    <property type="project" value="UniProtKB-SubCell"/>
</dbReference>
<dbReference type="GO" id="GO:0005819">
    <property type="term" value="C:spindle"/>
    <property type="evidence" value="ECO:0007669"/>
    <property type="project" value="UniProtKB-SubCell"/>
</dbReference>
<dbReference type="GO" id="GO:0005524">
    <property type="term" value="F:ATP binding"/>
    <property type="evidence" value="ECO:0007669"/>
    <property type="project" value="UniProtKB-KW"/>
</dbReference>
<dbReference type="GO" id="GO:0106310">
    <property type="term" value="F:protein serine kinase activity"/>
    <property type="evidence" value="ECO:0007669"/>
    <property type="project" value="RHEA"/>
</dbReference>
<dbReference type="GO" id="GO:0004674">
    <property type="term" value="F:protein serine/threonine kinase activity"/>
    <property type="evidence" value="ECO:0007669"/>
    <property type="project" value="UniProtKB-KW"/>
</dbReference>
<dbReference type="GO" id="GO:0051301">
    <property type="term" value="P:cell division"/>
    <property type="evidence" value="ECO:0007669"/>
    <property type="project" value="UniProtKB-KW"/>
</dbReference>
<dbReference type="GO" id="GO:0051321">
    <property type="term" value="P:meiotic cell cycle"/>
    <property type="evidence" value="ECO:0007669"/>
    <property type="project" value="UniProtKB-KW"/>
</dbReference>
<dbReference type="CDD" id="cd14007">
    <property type="entry name" value="STKc_Aurora"/>
    <property type="match status" value="1"/>
</dbReference>
<dbReference type="FunFam" id="3.30.200.20:FF:000042">
    <property type="entry name" value="Aurora kinase A"/>
    <property type="match status" value="1"/>
</dbReference>
<dbReference type="FunFam" id="1.10.510.10:FF:000235">
    <property type="entry name" value="Serine/threonine-protein kinase ark1"/>
    <property type="match status" value="1"/>
</dbReference>
<dbReference type="Gene3D" id="3.30.200.20">
    <property type="entry name" value="Phosphorylase Kinase, domain 1"/>
    <property type="match status" value="1"/>
</dbReference>
<dbReference type="Gene3D" id="1.10.510.10">
    <property type="entry name" value="Transferase(Phosphotransferase) domain 1"/>
    <property type="match status" value="1"/>
</dbReference>
<dbReference type="InterPro" id="IPR030616">
    <property type="entry name" value="Aur-like"/>
</dbReference>
<dbReference type="InterPro" id="IPR011009">
    <property type="entry name" value="Kinase-like_dom_sf"/>
</dbReference>
<dbReference type="InterPro" id="IPR000719">
    <property type="entry name" value="Prot_kinase_dom"/>
</dbReference>
<dbReference type="InterPro" id="IPR017441">
    <property type="entry name" value="Protein_kinase_ATP_BS"/>
</dbReference>
<dbReference type="InterPro" id="IPR008271">
    <property type="entry name" value="Ser/Thr_kinase_AS"/>
</dbReference>
<dbReference type="PANTHER" id="PTHR24350">
    <property type="entry name" value="SERINE/THREONINE-PROTEIN KINASE IAL-RELATED"/>
    <property type="match status" value="1"/>
</dbReference>
<dbReference type="Pfam" id="PF00069">
    <property type="entry name" value="Pkinase"/>
    <property type="match status" value="1"/>
</dbReference>
<dbReference type="SMART" id="SM00220">
    <property type="entry name" value="S_TKc"/>
    <property type="match status" value="1"/>
</dbReference>
<dbReference type="SUPFAM" id="SSF56112">
    <property type="entry name" value="Protein kinase-like (PK-like)"/>
    <property type="match status" value="1"/>
</dbReference>
<dbReference type="PROSITE" id="PS00107">
    <property type="entry name" value="PROTEIN_KINASE_ATP"/>
    <property type="match status" value="1"/>
</dbReference>
<dbReference type="PROSITE" id="PS50011">
    <property type="entry name" value="PROTEIN_KINASE_DOM"/>
    <property type="match status" value="1"/>
</dbReference>
<dbReference type="PROSITE" id="PS00108">
    <property type="entry name" value="PROTEIN_KINASE_ST"/>
    <property type="match status" value="1"/>
</dbReference>
<evidence type="ECO:0000250" key="1">
    <source>
        <dbReference type="UniProtKB" id="O14965"/>
    </source>
</evidence>
<evidence type="ECO:0000255" key="2">
    <source>
        <dbReference type="PROSITE-ProRule" id="PRU00159"/>
    </source>
</evidence>
<evidence type="ECO:0000255" key="3">
    <source>
        <dbReference type="PROSITE-ProRule" id="PRU10027"/>
    </source>
</evidence>
<evidence type="ECO:0000256" key="4">
    <source>
        <dbReference type="SAM" id="MobiDB-lite"/>
    </source>
</evidence>
<evidence type="ECO:0000269" key="5">
    <source>
    </source>
</evidence>
<evidence type="ECO:0000303" key="6">
    <source>
    </source>
</evidence>
<evidence type="ECO:0000305" key="7"/>
<evidence type="ECO:0000312" key="8">
    <source>
        <dbReference type="EMBL" id="BAJ10384.1"/>
    </source>
</evidence>
<keyword id="KW-0067">ATP-binding</keyword>
<keyword id="KW-0131">Cell cycle</keyword>
<keyword id="KW-0132">Cell division</keyword>
<keyword id="KW-0137">Centromere</keyword>
<keyword id="KW-0158">Chromosome</keyword>
<keyword id="KW-0963">Cytoplasm</keyword>
<keyword id="KW-0206">Cytoskeleton</keyword>
<keyword id="KW-0217">Developmental protein</keyword>
<keyword id="KW-0418">Kinase</keyword>
<keyword id="KW-0469">Meiosis</keyword>
<keyword id="KW-0498">Mitosis</keyword>
<keyword id="KW-0547">Nucleotide-binding</keyword>
<keyword id="KW-0539">Nucleus</keyword>
<keyword id="KW-0723">Serine/threonine-protein kinase</keyword>
<keyword id="KW-0808">Transferase</keyword>
<name>AURK_PATPE</name>
<comment type="function">
    <text evidence="5">Serine/threonine protein kinase that contributes to the regulation of cell cycle progression. Involved in meiotic apparatus formation and polar body extrusion. Contributes to Plk1 activation and phosphorylation of histone H3 at 'Ser-10' during meiosis I. Required for accurate progression of early embryonic M phase. Involved in chromosome alignment and cleavage furrow formation during early embryonic cycles. May be involved in mitotic spindle formation and cytokinesis.</text>
</comment>
<comment type="catalytic activity">
    <reaction evidence="1">
        <text>L-seryl-[protein] + ATP = O-phospho-L-seryl-[protein] + ADP + H(+)</text>
        <dbReference type="Rhea" id="RHEA:17989"/>
        <dbReference type="Rhea" id="RHEA-COMP:9863"/>
        <dbReference type="Rhea" id="RHEA-COMP:11604"/>
        <dbReference type="ChEBI" id="CHEBI:15378"/>
        <dbReference type="ChEBI" id="CHEBI:29999"/>
        <dbReference type="ChEBI" id="CHEBI:30616"/>
        <dbReference type="ChEBI" id="CHEBI:83421"/>
        <dbReference type="ChEBI" id="CHEBI:456216"/>
        <dbReference type="EC" id="2.7.11.1"/>
    </reaction>
</comment>
<comment type="catalytic activity">
    <reaction evidence="1">
        <text>L-threonyl-[protein] + ATP = O-phospho-L-threonyl-[protein] + ADP + H(+)</text>
        <dbReference type="Rhea" id="RHEA:46608"/>
        <dbReference type="Rhea" id="RHEA-COMP:11060"/>
        <dbReference type="Rhea" id="RHEA-COMP:11605"/>
        <dbReference type="ChEBI" id="CHEBI:15378"/>
        <dbReference type="ChEBI" id="CHEBI:30013"/>
        <dbReference type="ChEBI" id="CHEBI:30616"/>
        <dbReference type="ChEBI" id="CHEBI:61977"/>
        <dbReference type="ChEBI" id="CHEBI:456216"/>
        <dbReference type="EC" id="2.7.11.1"/>
    </reaction>
</comment>
<comment type="activity regulation">
    <text evidence="5">Cdc2 activity is required for activation.</text>
</comment>
<comment type="subcellular location">
    <subcellularLocation>
        <location evidence="5">Cytoplasm</location>
        <location evidence="5">Cytoskeleton</location>
        <location evidence="5">Spindle</location>
    </subcellularLocation>
    <subcellularLocation>
        <location evidence="5">Midbody</location>
    </subcellularLocation>
    <subcellularLocation>
        <location evidence="5">Cytoplasm</location>
        <location evidence="5">Cytoskeleton</location>
        <location evidence="5">Microtubule organizing center</location>
        <location evidence="5">Centrosome</location>
    </subcellularLocation>
    <subcellularLocation>
        <location evidence="5">Nucleus</location>
    </subcellularLocation>
    <subcellularLocation>
        <location evidence="5">Chromosome</location>
    </subcellularLocation>
    <subcellularLocation>
        <location evidence="5">Chromosome</location>
        <location evidence="5">Centromere</location>
    </subcellularLocation>
    <text evidence="5">Localized to cytoplasm in immature oocytes. After 1-methyladenine-induced oocyte maturation during meiosis I, becomes localized initially to the chromosomes, then to both chromosomes and the meiotic spindle, and subsequently relocates from the chromosomes to the midzone at anaphase onset.</text>
</comment>
<comment type="developmental stage">
    <text evidence="5">Expressed in immature oocytes. Expressed at constant levels during meiosis and early embryonic cycles (at protein level).</text>
</comment>
<comment type="similarity">
    <text evidence="2">Belongs to the protein kinase superfamily. Ser/Thr protein kinase family.</text>
</comment>
<protein>
    <recommendedName>
        <fullName evidence="8">Aurora kinase</fullName>
        <ecNumber evidence="1">2.7.11.1</ecNumber>
    </recommendedName>
    <alternativeName>
        <fullName evidence="6">ApAurora</fullName>
    </alternativeName>
</protein>
<accession>D7UQM5</accession>
<gene>
    <name evidence="8" type="primary">aur</name>
</gene>
<reference evidence="7 8" key="1">
    <citation type="journal article" date="2010" name="J. Cell Sci.">
        <title>A single starfish Aurora kinase performs the combined functions of Aurora-A and Aurora-B in human cells.</title>
        <authorList>
            <person name="Abe Y."/>
            <person name="Okumura E."/>
            <person name="Hosoya T."/>
            <person name="Hirota T."/>
            <person name="Kishimoto T."/>
        </authorList>
    </citation>
    <scope>NUCLEOTIDE SEQUENCE [MRNA]</scope>
    <scope>FUNCTION</scope>
    <scope>ACTIVITY REGULATION</scope>
    <scope>SUBCELLULAR LOCATION</scope>
    <scope>DEVELOPMENTAL STAGE</scope>
    <scope>MUTAGENESIS OF ASP-290</scope>
    <source>
        <tissue evidence="5">Oocyte</tissue>
    </source>
</reference>